<accession>A5UBU2</accession>
<proteinExistence type="inferred from homology"/>
<reference key="1">
    <citation type="journal article" date="2007" name="Genome Biol.">
        <title>Characterization and modeling of the Haemophilus influenzae core and supragenomes based on the complete genomic sequences of Rd and 12 clinical nontypeable strains.</title>
        <authorList>
            <person name="Hogg J.S."/>
            <person name="Hu F.Z."/>
            <person name="Janto B."/>
            <person name="Boissy R."/>
            <person name="Hayes J."/>
            <person name="Keefe R."/>
            <person name="Post J.C."/>
            <person name="Ehrlich G.D."/>
        </authorList>
    </citation>
    <scope>NUCLEOTIDE SEQUENCE [LARGE SCALE GENOMIC DNA]</scope>
    <source>
        <strain>PittEE</strain>
    </source>
</reference>
<sequence>MSRPRKRWRDVDGVFLLDKPQGMSSNDIMQKVKRLFQANKAGHTGALDPLATGMLPICLGEATKFSQFLLDADKRYLVTAKLGERTDTSDAEGQVVETREVHVETPQILTALEQFRGDILQVPTMFSALKHNGKPLYEYARQGITVEREARPITIFELNFIEYHAPFLTLEVHCSKGTYIRTLVDDLGEVLGCGAHVTMLRRTAVADYPVAEMMPINELQLLAESFPLSELDRLLLPTDTAVSKLPALHLDVEQSKAIGFGQRVKFANEQQLSGQVRLFSAENLFLGVALIDGNIIRPQRLITQSA</sequence>
<evidence type="ECO:0000255" key="1">
    <source>
        <dbReference type="HAMAP-Rule" id="MF_01080"/>
    </source>
</evidence>
<gene>
    <name evidence="1" type="primary">truB</name>
    <name type="ordered locus">CGSHiEE_04190</name>
</gene>
<protein>
    <recommendedName>
        <fullName evidence="1">tRNA pseudouridine synthase B</fullName>
        <ecNumber evidence="1">5.4.99.25</ecNumber>
    </recommendedName>
    <alternativeName>
        <fullName evidence="1">tRNA pseudouridine(55) synthase</fullName>
        <shortName evidence="1">Psi55 synthase</shortName>
    </alternativeName>
    <alternativeName>
        <fullName evidence="1">tRNA pseudouridylate synthase</fullName>
    </alternativeName>
    <alternativeName>
        <fullName evidence="1">tRNA-uridine isomerase</fullName>
    </alternativeName>
</protein>
<organism>
    <name type="scientific">Haemophilus influenzae (strain PittEE)</name>
    <dbReference type="NCBI Taxonomy" id="374930"/>
    <lineage>
        <taxon>Bacteria</taxon>
        <taxon>Pseudomonadati</taxon>
        <taxon>Pseudomonadota</taxon>
        <taxon>Gammaproteobacteria</taxon>
        <taxon>Pasteurellales</taxon>
        <taxon>Pasteurellaceae</taxon>
        <taxon>Haemophilus</taxon>
    </lineage>
</organism>
<dbReference type="EC" id="5.4.99.25" evidence="1"/>
<dbReference type="EMBL" id="CP000671">
    <property type="protein sequence ID" value="ABQ98243.1"/>
    <property type="molecule type" value="Genomic_DNA"/>
</dbReference>
<dbReference type="SMR" id="A5UBU2"/>
<dbReference type="KEGG" id="hip:CGSHiEE_04190"/>
<dbReference type="HOGENOM" id="CLU_032087_0_3_6"/>
<dbReference type="GO" id="GO:0003723">
    <property type="term" value="F:RNA binding"/>
    <property type="evidence" value="ECO:0007669"/>
    <property type="project" value="InterPro"/>
</dbReference>
<dbReference type="GO" id="GO:0160148">
    <property type="term" value="F:tRNA pseudouridine(55) synthase activity"/>
    <property type="evidence" value="ECO:0007669"/>
    <property type="project" value="UniProtKB-EC"/>
</dbReference>
<dbReference type="GO" id="GO:1990481">
    <property type="term" value="P:mRNA pseudouridine synthesis"/>
    <property type="evidence" value="ECO:0007669"/>
    <property type="project" value="TreeGrafter"/>
</dbReference>
<dbReference type="GO" id="GO:0031119">
    <property type="term" value="P:tRNA pseudouridine synthesis"/>
    <property type="evidence" value="ECO:0007669"/>
    <property type="project" value="UniProtKB-UniRule"/>
</dbReference>
<dbReference type="CDD" id="cd02573">
    <property type="entry name" value="PseudoU_synth_EcTruB"/>
    <property type="match status" value="1"/>
</dbReference>
<dbReference type="CDD" id="cd21152">
    <property type="entry name" value="PUA_TruB_bacterial"/>
    <property type="match status" value="1"/>
</dbReference>
<dbReference type="FunFam" id="2.30.130.10:FF:000012">
    <property type="entry name" value="tRNA pseudouridine synthase B"/>
    <property type="match status" value="1"/>
</dbReference>
<dbReference type="FunFam" id="3.30.2350.10:FF:000003">
    <property type="entry name" value="tRNA pseudouridine synthase B"/>
    <property type="match status" value="1"/>
</dbReference>
<dbReference type="Gene3D" id="3.30.2350.10">
    <property type="entry name" value="Pseudouridine synthase"/>
    <property type="match status" value="1"/>
</dbReference>
<dbReference type="Gene3D" id="2.30.130.10">
    <property type="entry name" value="PUA domain"/>
    <property type="match status" value="1"/>
</dbReference>
<dbReference type="HAMAP" id="MF_01080">
    <property type="entry name" value="TruB_bact"/>
    <property type="match status" value="1"/>
</dbReference>
<dbReference type="InterPro" id="IPR020103">
    <property type="entry name" value="PsdUridine_synth_cat_dom_sf"/>
</dbReference>
<dbReference type="InterPro" id="IPR002501">
    <property type="entry name" value="PsdUridine_synth_N"/>
</dbReference>
<dbReference type="InterPro" id="IPR015947">
    <property type="entry name" value="PUA-like_sf"/>
</dbReference>
<dbReference type="InterPro" id="IPR036974">
    <property type="entry name" value="PUA_sf"/>
</dbReference>
<dbReference type="InterPro" id="IPR014780">
    <property type="entry name" value="tRNA_psdUridine_synth_TruB"/>
</dbReference>
<dbReference type="InterPro" id="IPR015240">
    <property type="entry name" value="tRNA_sdUridine_synth_fam1_C"/>
</dbReference>
<dbReference type="InterPro" id="IPR032819">
    <property type="entry name" value="TruB_C"/>
</dbReference>
<dbReference type="NCBIfam" id="TIGR00431">
    <property type="entry name" value="TruB"/>
    <property type="match status" value="1"/>
</dbReference>
<dbReference type="PANTHER" id="PTHR13767:SF2">
    <property type="entry name" value="PSEUDOURIDYLATE SYNTHASE TRUB1"/>
    <property type="match status" value="1"/>
</dbReference>
<dbReference type="PANTHER" id="PTHR13767">
    <property type="entry name" value="TRNA-PSEUDOURIDINE SYNTHASE"/>
    <property type="match status" value="1"/>
</dbReference>
<dbReference type="Pfam" id="PF09157">
    <property type="entry name" value="TruB-C_2"/>
    <property type="match status" value="1"/>
</dbReference>
<dbReference type="Pfam" id="PF16198">
    <property type="entry name" value="TruB_C_2"/>
    <property type="match status" value="1"/>
</dbReference>
<dbReference type="Pfam" id="PF01509">
    <property type="entry name" value="TruB_N"/>
    <property type="match status" value="1"/>
</dbReference>
<dbReference type="SUPFAM" id="SSF55120">
    <property type="entry name" value="Pseudouridine synthase"/>
    <property type="match status" value="1"/>
</dbReference>
<dbReference type="SUPFAM" id="SSF88697">
    <property type="entry name" value="PUA domain-like"/>
    <property type="match status" value="1"/>
</dbReference>
<feature type="chain" id="PRO_1000084602" description="tRNA pseudouridine synthase B">
    <location>
        <begin position="1"/>
        <end position="306"/>
    </location>
</feature>
<feature type="active site" description="Nucleophile" evidence="1">
    <location>
        <position position="48"/>
    </location>
</feature>
<name>TRUB_HAEIE</name>
<comment type="function">
    <text evidence="1">Responsible for synthesis of pseudouridine from uracil-55 in the psi GC loop of transfer RNAs.</text>
</comment>
<comment type="catalytic activity">
    <reaction evidence="1">
        <text>uridine(55) in tRNA = pseudouridine(55) in tRNA</text>
        <dbReference type="Rhea" id="RHEA:42532"/>
        <dbReference type="Rhea" id="RHEA-COMP:10101"/>
        <dbReference type="Rhea" id="RHEA-COMP:10102"/>
        <dbReference type="ChEBI" id="CHEBI:65314"/>
        <dbReference type="ChEBI" id="CHEBI:65315"/>
        <dbReference type="EC" id="5.4.99.25"/>
    </reaction>
</comment>
<comment type="similarity">
    <text evidence="1">Belongs to the pseudouridine synthase TruB family. Type 1 subfamily.</text>
</comment>
<keyword id="KW-0413">Isomerase</keyword>
<keyword id="KW-0819">tRNA processing</keyword>